<reference key="1">
    <citation type="journal article" date="2006" name="Proc. Natl. Acad. Sci. U.S.A.">
        <title>Genome sequence of Synechococcus CC9311: insights into adaptation to a coastal environment.</title>
        <authorList>
            <person name="Palenik B."/>
            <person name="Ren Q."/>
            <person name="Dupont C.L."/>
            <person name="Myers G.S."/>
            <person name="Heidelberg J.F."/>
            <person name="Badger J.H."/>
            <person name="Madupu R."/>
            <person name="Nelson W.C."/>
            <person name="Brinkac L.M."/>
            <person name="Dodson R.J."/>
            <person name="Durkin A.S."/>
            <person name="Daugherty S.C."/>
            <person name="Sullivan S.A."/>
            <person name="Khouri H."/>
            <person name="Mohamoud Y."/>
            <person name="Halpin R."/>
            <person name="Paulsen I.T."/>
        </authorList>
    </citation>
    <scope>NUCLEOTIDE SEQUENCE [LARGE SCALE GENOMIC DNA]</scope>
    <source>
        <strain>CC9311</strain>
    </source>
</reference>
<sequence length="369" mass="39908">MDQNCTPLHDLCIAAGGRMVSFAGWEMPVQFSGLMAEHKAVRSDSGMFDISHMGVLRIEGANPKDALQQLVPSDLHRIGPGQACYSVLLNEQGGIIDDLIIYDLGPSLLDESHETLLVVINAACAETDTAWIRQHLERADLQVLDEKKDGVLLALQGPKAIGLLERLSGSDLSELPRFGHCSLNIHGLQAPVFTARTGYTGEDGVELLLKADDGRQLWQLLLEEGVTPCGLGARDTLRLEAAMHLYGQDMDAATTPFEAGLGWLVHLEMPALFIGRQALEQAAEQGPSKRLVGLKLQGRSIARHDYPVIHNGATVGVVTSGSWSPTLQEPIALASLPPALAKLGTELSVEIRGQLQPATVVKRPFYRRS</sequence>
<comment type="function">
    <text evidence="1">The glycine cleavage system catalyzes the degradation of glycine.</text>
</comment>
<comment type="catalytic activity">
    <reaction evidence="1">
        <text>N(6)-[(R)-S(8)-aminomethyldihydrolipoyl]-L-lysyl-[protein] + (6S)-5,6,7,8-tetrahydrofolate = N(6)-[(R)-dihydrolipoyl]-L-lysyl-[protein] + (6R)-5,10-methylene-5,6,7,8-tetrahydrofolate + NH4(+)</text>
        <dbReference type="Rhea" id="RHEA:16945"/>
        <dbReference type="Rhea" id="RHEA-COMP:10475"/>
        <dbReference type="Rhea" id="RHEA-COMP:10492"/>
        <dbReference type="ChEBI" id="CHEBI:15636"/>
        <dbReference type="ChEBI" id="CHEBI:28938"/>
        <dbReference type="ChEBI" id="CHEBI:57453"/>
        <dbReference type="ChEBI" id="CHEBI:83100"/>
        <dbReference type="ChEBI" id="CHEBI:83143"/>
        <dbReference type="EC" id="2.1.2.10"/>
    </reaction>
</comment>
<comment type="subunit">
    <text evidence="1">The glycine cleavage system is composed of four proteins: P, T, L and H.</text>
</comment>
<comment type="similarity">
    <text evidence="1">Belongs to the GcvT family.</text>
</comment>
<organism>
    <name type="scientific">Synechococcus sp. (strain CC9311)</name>
    <dbReference type="NCBI Taxonomy" id="64471"/>
    <lineage>
        <taxon>Bacteria</taxon>
        <taxon>Bacillati</taxon>
        <taxon>Cyanobacteriota</taxon>
        <taxon>Cyanophyceae</taxon>
        <taxon>Synechococcales</taxon>
        <taxon>Synechococcaceae</taxon>
        <taxon>Synechococcus</taxon>
    </lineage>
</organism>
<evidence type="ECO:0000255" key="1">
    <source>
        <dbReference type="HAMAP-Rule" id="MF_00259"/>
    </source>
</evidence>
<feature type="chain" id="PRO_1000047722" description="Aminomethyltransferase">
    <location>
        <begin position="1"/>
        <end position="369"/>
    </location>
</feature>
<protein>
    <recommendedName>
        <fullName evidence="1">Aminomethyltransferase</fullName>
        <ecNumber evidence="1">2.1.2.10</ecNumber>
    </recommendedName>
    <alternativeName>
        <fullName evidence="1">Glycine cleavage system T protein</fullName>
    </alternativeName>
</protein>
<proteinExistence type="inferred from homology"/>
<name>GCST_SYNS3</name>
<accession>Q0I682</accession>
<dbReference type="EC" id="2.1.2.10" evidence="1"/>
<dbReference type="EMBL" id="CP000435">
    <property type="protein sequence ID" value="ABI47383.1"/>
    <property type="molecule type" value="Genomic_DNA"/>
</dbReference>
<dbReference type="RefSeq" id="WP_011620740.1">
    <property type="nucleotide sequence ID" value="NC_008319.1"/>
</dbReference>
<dbReference type="SMR" id="Q0I682"/>
<dbReference type="STRING" id="64471.sync_2853"/>
<dbReference type="KEGG" id="syg:sync_2853"/>
<dbReference type="eggNOG" id="COG0404">
    <property type="taxonomic scope" value="Bacteria"/>
</dbReference>
<dbReference type="HOGENOM" id="CLU_007884_10_2_3"/>
<dbReference type="OrthoDB" id="9774591at2"/>
<dbReference type="Proteomes" id="UP000001961">
    <property type="component" value="Chromosome"/>
</dbReference>
<dbReference type="GO" id="GO:0005829">
    <property type="term" value="C:cytosol"/>
    <property type="evidence" value="ECO:0007669"/>
    <property type="project" value="TreeGrafter"/>
</dbReference>
<dbReference type="GO" id="GO:0005960">
    <property type="term" value="C:glycine cleavage complex"/>
    <property type="evidence" value="ECO:0007669"/>
    <property type="project" value="InterPro"/>
</dbReference>
<dbReference type="GO" id="GO:0004047">
    <property type="term" value="F:aminomethyltransferase activity"/>
    <property type="evidence" value="ECO:0007669"/>
    <property type="project" value="UniProtKB-UniRule"/>
</dbReference>
<dbReference type="GO" id="GO:0008483">
    <property type="term" value="F:transaminase activity"/>
    <property type="evidence" value="ECO:0007669"/>
    <property type="project" value="UniProtKB-KW"/>
</dbReference>
<dbReference type="GO" id="GO:0019464">
    <property type="term" value="P:glycine decarboxylation via glycine cleavage system"/>
    <property type="evidence" value="ECO:0007669"/>
    <property type="project" value="UniProtKB-UniRule"/>
</dbReference>
<dbReference type="FunFam" id="2.40.30.110:FF:000003">
    <property type="entry name" value="Aminomethyltransferase"/>
    <property type="match status" value="1"/>
</dbReference>
<dbReference type="FunFam" id="3.30.70.1400:FF:000001">
    <property type="entry name" value="Aminomethyltransferase"/>
    <property type="match status" value="1"/>
</dbReference>
<dbReference type="FunFam" id="4.10.1250.10:FF:000001">
    <property type="entry name" value="Aminomethyltransferase"/>
    <property type="match status" value="1"/>
</dbReference>
<dbReference type="Gene3D" id="2.40.30.110">
    <property type="entry name" value="Aminomethyltransferase beta-barrel domains"/>
    <property type="match status" value="1"/>
</dbReference>
<dbReference type="Gene3D" id="3.30.70.1400">
    <property type="entry name" value="Aminomethyltransferase beta-barrel domains"/>
    <property type="match status" value="1"/>
</dbReference>
<dbReference type="Gene3D" id="4.10.1250.10">
    <property type="entry name" value="Aminomethyltransferase fragment"/>
    <property type="match status" value="1"/>
</dbReference>
<dbReference type="Gene3D" id="3.30.1360.120">
    <property type="entry name" value="Probable tRNA modification gtpase trme, domain 1"/>
    <property type="match status" value="1"/>
</dbReference>
<dbReference type="HAMAP" id="MF_00259">
    <property type="entry name" value="GcvT"/>
    <property type="match status" value="1"/>
</dbReference>
<dbReference type="InterPro" id="IPR006223">
    <property type="entry name" value="GCS_T"/>
</dbReference>
<dbReference type="InterPro" id="IPR022903">
    <property type="entry name" value="GCS_T_bac"/>
</dbReference>
<dbReference type="InterPro" id="IPR013977">
    <property type="entry name" value="GCST_C"/>
</dbReference>
<dbReference type="InterPro" id="IPR006222">
    <property type="entry name" value="GCV_T_N"/>
</dbReference>
<dbReference type="InterPro" id="IPR028896">
    <property type="entry name" value="GcvT/YgfZ/DmdA"/>
</dbReference>
<dbReference type="InterPro" id="IPR029043">
    <property type="entry name" value="GcvT/YgfZ_C"/>
</dbReference>
<dbReference type="InterPro" id="IPR027266">
    <property type="entry name" value="TrmE/GcvT_dom1"/>
</dbReference>
<dbReference type="NCBIfam" id="TIGR00528">
    <property type="entry name" value="gcvT"/>
    <property type="match status" value="1"/>
</dbReference>
<dbReference type="NCBIfam" id="NF001567">
    <property type="entry name" value="PRK00389.1"/>
    <property type="match status" value="1"/>
</dbReference>
<dbReference type="PANTHER" id="PTHR43757">
    <property type="entry name" value="AMINOMETHYLTRANSFERASE"/>
    <property type="match status" value="1"/>
</dbReference>
<dbReference type="PANTHER" id="PTHR43757:SF2">
    <property type="entry name" value="AMINOMETHYLTRANSFERASE, MITOCHONDRIAL"/>
    <property type="match status" value="1"/>
</dbReference>
<dbReference type="Pfam" id="PF01571">
    <property type="entry name" value="GCV_T"/>
    <property type="match status" value="1"/>
</dbReference>
<dbReference type="Pfam" id="PF08669">
    <property type="entry name" value="GCV_T_C"/>
    <property type="match status" value="1"/>
</dbReference>
<dbReference type="PIRSF" id="PIRSF006487">
    <property type="entry name" value="GcvT"/>
    <property type="match status" value="1"/>
</dbReference>
<dbReference type="SUPFAM" id="SSF101790">
    <property type="entry name" value="Aminomethyltransferase beta-barrel domain"/>
    <property type="match status" value="1"/>
</dbReference>
<dbReference type="SUPFAM" id="SSF103025">
    <property type="entry name" value="Folate-binding domain"/>
    <property type="match status" value="1"/>
</dbReference>
<keyword id="KW-0032">Aminotransferase</keyword>
<keyword id="KW-1185">Reference proteome</keyword>
<keyword id="KW-0808">Transferase</keyword>
<gene>
    <name evidence="1" type="primary">gcvT</name>
    <name type="ordered locus">sync_2853</name>
</gene>